<keyword id="KW-0963">Cytoplasm</keyword>
<keyword id="KW-0440">LIM domain</keyword>
<keyword id="KW-0479">Metal-binding</keyword>
<keyword id="KW-0597">Phosphoprotein</keyword>
<keyword id="KW-1185">Reference proteome</keyword>
<keyword id="KW-0808">Transferase</keyword>
<keyword id="KW-0862">Zinc</keyword>
<keyword id="KW-0863">Zinc-finger</keyword>
<dbReference type="EC" id="2.3.2.27" evidence="1"/>
<dbReference type="EMBL" id="CU329672">
    <property type="protein sequence ID" value="CAA20857.2"/>
    <property type="molecule type" value="Genomic_DNA"/>
</dbReference>
<dbReference type="RefSeq" id="NP_588346.2">
    <property type="nucleotide sequence ID" value="NM_001023337.2"/>
</dbReference>
<dbReference type="BioGRID" id="275651">
    <property type="interactions" value="44"/>
</dbReference>
<dbReference type="FunCoup" id="Q76PD2">
    <property type="interactions" value="81"/>
</dbReference>
<dbReference type="STRING" id="284812.Q76PD2"/>
<dbReference type="iPTMnet" id="Q76PD2"/>
<dbReference type="PaxDb" id="4896-SPCC1223.01.1"/>
<dbReference type="EnsemblFungi" id="SPCC1223.01.1">
    <property type="protein sequence ID" value="SPCC1223.01.1:pep"/>
    <property type="gene ID" value="SPCC1223.01"/>
</dbReference>
<dbReference type="GeneID" id="2539079"/>
<dbReference type="KEGG" id="spo:2539079"/>
<dbReference type="PomBase" id="SPCC1223.01"/>
<dbReference type="VEuPathDB" id="FungiDB:SPCC1223.01"/>
<dbReference type="eggNOG" id="KOG2231">
    <property type="taxonomic scope" value="Eukaryota"/>
</dbReference>
<dbReference type="HOGENOM" id="CLU_008515_0_0_1"/>
<dbReference type="InParanoid" id="Q76PD2"/>
<dbReference type="OMA" id="VFTHEHT"/>
<dbReference type="PhylomeDB" id="Q76PD2"/>
<dbReference type="UniPathway" id="UPA00143"/>
<dbReference type="PRO" id="PR:Q76PD2"/>
<dbReference type="Proteomes" id="UP000002485">
    <property type="component" value="Chromosome III"/>
</dbReference>
<dbReference type="GO" id="GO:0005737">
    <property type="term" value="C:cytoplasm"/>
    <property type="evidence" value="ECO:0007005"/>
    <property type="project" value="PomBase"/>
</dbReference>
<dbReference type="GO" id="GO:0005829">
    <property type="term" value="C:cytosol"/>
    <property type="evidence" value="ECO:0007005"/>
    <property type="project" value="PomBase"/>
</dbReference>
<dbReference type="GO" id="GO:0043022">
    <property type="term" value="F:ribosome binding"/>
    <property type="evidence" value="ECO:0000318"/>
    <property type="project" value="GO_Central"/>
</dbReference>
<dbReference type="GO" id="GO:0061630">
    <property type="term" value="F:ubiquitin protein ligase activity"/>
    <property type="evidence" value="ECO:0000318"/>
    <property type="project" value="GO_Central"/>
</dbReference>
<dbReference type="GO" id="GO:0008270">
    <property type="term" value="F:zinc ion binding"/>
    <property type="evidence" value="ECO:0000255"/>
    <property type="project" value="PomBase"/>
</dbReference>
<dbReference type="GO" id="GO:0016567">
    <property type="term" value="P:protein ubiquitination"/>
    <property type="evidence" value="ECO:0000318"/>
    <property type="project" value="GO_Central"/>
</dbReference>
<dbReference type="GO" id="GO:0072344">
    <property type="term" value="P:rescue of stalled ribosome"/>
    <property type="evidence" value="ECO:0000318"/>
    <property type="project" value="GO_Central"/>
</dbReference>
<dbReference type="CDD" id="cd16615">
    <property type="entry name" value="RING-HC_ZNF598"/>
    <property type="match status" value="1"/>
</dbReference>
<dbReference type="Gene3D" id="3.30.40.10">
    <property type="entry name" value="Zinc/RING finger domain, C3HC4 (zinc finger)"/>
    <property type="match status" value="1"/>
</dbReference>
<dbReference type="InterPro" id="IPR041888">
    <property type="entry name" value="RING-HC_ZNF598/Hel2"/>
</dbReference>
<dbReference type="InterPro" id="IPR056437">
    <property type="entry name" value="Znf-C2H2_ZNF598/Hel2"/>
</dbReference>
<dbReference type="InterPro" id="IPR044288">
    <property type="entry name" value="ZNF598/Hel2"/>
</dbReference>
<dbReference type="InterPro" id="IPR013087">
    <property type="entry name" value="Znf_C2H2_type"/>
</dbReference>
<dbReference type="InterPro" id="IPR001841">
    <property type="entry name" value="Znf_RING"/>
</dbReference>
<dbReference type="InterPro" id="IPR013083">
    <property type="entry name" value="Znf_RING/FYVE/PHD"/>
</dbReference>
<dbReference type="InterPro" id="IPR017907">
    <property type="entry name" value="Znf_RING_CS"/>
</dbReference>
<dbReference type="PANTHER" id="PTHR22938:SF0">
    <property type="entry name" value="E3 UBIQUITIN-PROTEIN LIGASE ZNF598"/>
    <property type="match status" value="1"/>
</dbReference>
<dbReference type="PANTHER" id="PTHR22938">
    <property type="entry name" value="ZINC FINGER PROTEIN 598"/>
    <property type="match status" value="1"/>
</dbReference>
<dbReference type="Pfam" id="PF23202">
    <property type="entry name" value="PAH_ZNF598"/>
    <property type="match status" value="1"/>
</dbReference>
<dbReference type="Pfam" id="PF23230">
    <property type="entry name" value="zf-C2H2_13"/>
    <property type="match status" value="1"/>
</dbReference>
<dbReference type="Pfam" id="PF13920">
    <property type="entry name" value="zf-C3HC4_3"/>
    <property type="match status" value="1"/>
</dbReference>
<dbReference type="SMART" id="SM00355">
    <property type="entry name" value="ZnF_C2H2"/>
    <property type="match status" value="4"/>
</dbReference>
<dbReference type="SUPFAM" id="SSF57850">
    <property type="entry name" value="RING/U-box"/>
    <property type="match status" value="1"/>
</dbReference>
<dbReference type="PROSITE" id="PS00518">
    <property type="entry name" value="ZF_RING_1"/>
    <property type="match status" value="1"/>
</dbReference>
<dbReference type="PROSITE" id="PS50089">
    <property type="entry name" value="ZF_RING_2"/>
    <property type="match status" value="1"/>
</dbReference>
<dbReference type="PROSITE" id="PS00028">
    <property type="entry name" value="ZINC_FINGER_C2H2_1"/>
    <property type="match status" value="3"/>
</dbReference>
<accession>Q76PD2</accession>
<evidence type="ECO:0000250" key="1">
    <source>
        <dbReference type="UniProtKB" id="Q05580"/>
    </source>
</evidence>
<evidence type="ECO:0000255" key="2">
    <source>
        <dbReference type="PROSITE-ProRule" id="PRU00125"/>
    </source>
</evidence>
<evidence type="ECO:0000255" key="3">
    <source>
        <dbReference type="PROSITE-ProRule" id="PRU00175"/>
    </source>
</evidence>
<evidence type="ECO:0000256" key="4">
    <source>
        <dbReference type="SAM" id="MobiDB-lite"/>
    </source>
</evidence>
<evidence type="ECO:0000269" key="5">
    <source>
    </source>
</evidence>
<evidence type="ECO:0000269" key="6">
    <source>
    </source>
</evidence>
<evidence type="ECO:0000305" key="7"/>
<protein>
    <recommendedName>
        <fullName evidence="1">E3 ubiquitin-protein ligase hel2</fullName>
        <ecNumber evidence="1">2.3.2.27</ecNumber>
    </recommendedName>
    <alternativeName>
        <fullName evidence="1">Histone E3 ligase 2</fullName>
    </alternativeName>
    <alternativeName>
        <fullName evidence="7">RING-type E3 ubiquitin transferase hel2</fullName>
    </alternativeName>
</protein>
<sequence length="732" mass="82700">MSPSGPNLNNKEHNRASEKKNSRTHNKKTNRNQSKEKPVSSRSVETPKNAVCLEPVGTDPVSNVATVDASKEEQDEDEQICFICAEGITYSCVLPCNHRMCHVCALRLRALYKTKECTFCKTEWDTVLITKDHEIDIHDVDLAKLPFQDEKLGIVYSDEHAQEESNLLLQFNCPEDACDITCKGWFDLKLHAKVKHHKFFCDLCVKNKKVFTHEHTLFSKKGLTKHNEVGDQGSDLEITGFKGHPKCEFCNTHFYDDDELFKHCREKHERCYICDQVAGRPTHQYFKNYDSLERHFEKDHYICRERECLERKFVVFGTEIDLKAHQLDEHPHNFTQRELREARRIIPQFSYDPPGASGRNRRERTSSTPSEQSTSVNETANSLSNLHLSRGEIAHLRQEEYVREQQARHRDFGFTLSNPAPTSARPATSTRTISRGKTRTLRNEDFPSLAEVANQNSSSAPSVPVSAPRLSGKSASRNHVPSPPKGTKSPMASSEQAQHQQVIDRMQKLTNYDDHKINDFKFAVSSFRGNVMPAREAVARITKLVAKPHEQLSGVFNQIANLLENKEKSRELLEAWQEWKILNAKDDTRIGTTNSNLLRLKRSNRTAAQTASVWNRIERAAAHDGPSLSAPSSSINLANITSRPTNSSAANTPSWGVRKARASALNARSEEDFPALPPSTSKRISVQLGKKQARPVDSWGSTPNTSSNRNSNTMGVSKKKNGKKQTVLFHIG</sequence>
<proteinExistence type="evidence at protein level"/>
<feature type="chain" id="PRO_0000353800" description="E3 ubiquitin-protein ligase hel2">
    <location>
        <begin position="1"/>
        <end position="732"/>
    </location>
</feature>
<feature type="domain" description="LIM zinc-binding" evidence="2">
    <location>
        <begin position="245"/>
        <end position="315"/>
    </location>
</feature>
<feature type="zinc finger region" description="RING-type" evidence="3">
    <location>
        <begin position="81"/>
        <end position="121"/>
    </location>
</feature>
<feature type="region of interest" description="Disordered" evidence="4">
    <location>
        <begin position="1"/>
        <end position="48"/>
    </location>
</feature>
<feature type="region of interest" description="Disordered" evidence="4">
    <location>
        <begin position="345"/>
        <end position="380"/>
    </location>
</feature>
<feature type="region of interest" description="Disordered" evidence="4">
    <location>
        <begin position="411"/>
        <end position="501"/>
    </location>
</feature>
<feature type="region of interest" description="Disordered" evidence="4">
    <location>
        <begin position="623"/>
        <end position="732"/>
    </location>
</feature>
<feature type="compositionally biased region" description="Basic and acidic residues" evidence="4">
    <location>
        <begin position="10"/>
        <end position="21"/>
    </location>
</feature>
<feature type="compositionally biased region" description="Polar residues" evidence="4">
    <location>
        <begin position="366"/>
        <end position="380"/>
    </location>
</feature>
<feature type="compositionally biased region" description="Polar residues" evidence="4">
    <location>
        <begin position="415"/>
        <end position="433"/>
    </location>
</feature>
<feature type="compositionally biased region" description="Low complexity" evidence="4">
    <location>
        <begin position="457"/>
        <end position="468"/>
    </location>
</feature>
<feature type="compositionally biased region" description="Polar residues" evidence="4">
    <location>
        <begin position="490"/>
        <end position="501"/>
    </location>
</feature>
<feature type="compositionally biased region" description="Polar residues" evidence="4">
    <location>
        <begin position="629"/>
        <end position="654"/>
    </location>
</feature>
<feature type="compositionally biased region" description="Low complexity" evidence="4">
    <location>
        <begin position="701"/>
        <end position="713"/>
    </location>
</feature>
<feature type="modified residue" description="Phosphoserine" evidence="6">
    <location>
        <position position="482"/>
    </location>
</feature>
<reference key="1">
    <citation type="journal article" date="2002" name="Nature">
        <title>The genome sequence of Schizosaccharomyces pombe.</title>
        <authorList>
            <person name="Wood V."/>
            <person name="Gwilliam R."/>
            <person name="Rajandream M.A."/>
            <person name="Lyne M.H."/>
            <person name="Lyne R."/>
            <person name="Stewart A."/>
            <person name="Sgouros J.G."/>
            <person name="Peat N."/>
            <person name="Hayles J."/>
            <person name="Baker S.G."/>
            <person name="Basham D."/>
            <person name="Bowman S."/>
            <person name="Brooks K."/>
            <person name="Brown D."/>
            <person name="Brown S."/>
            <person name="Chillingworth T."/>
            <person name="Churcher C.M."/>
            <person name="Collins M."/>
            <person name="Connor R."/>
            <person name="Cronin A."/>
            <person name="Davis P."/>
            <person name="Feltwell T."/>
            <person name="Fraser A."/>
            <person name="Gentles S."/>
            <person name="Goble A."/>
            <person name="Hamlin N."/>
            <person name="Harris D.E."/>
            <person name="Hidalgo J."/>
            <person name="Hodgson G."/>
            <person name="Holroyd S."/>
            <person name="Hornsby T."/>
            <person name="Howarth S."/>
            <person name="Huckle E.J."/>
            <person name="Hunt S."/>
            <person name="Jagels K."/>
            <person name="James K.D."/>
            <person name="Jones L."/>
            <person name="Jones M."/>
            <person name="Leather S."/>
            <person name="McDonald S."/>
            <person name="McLean J."/>
            <person name="Mooney P."/>
            <person name="Moule S."/>
            <person name="Mungall K.L."/>
            <person name="Murphy L.D."/>
            <person name="Niblett D."/>
            <person name="Odell C."/>
            <person name="Oliver K."/>
            <person name="O'Neil S."/>
            <person name="Pearson D."/>
            <person name="Quail M.A."/>
            <person name="Rabbinowitsch E."/>
            <person name="Rutherford K.M."/>
            <person name="Rutter S."/>
            <person name="Saunders D."/>
            <person name="Seeger K."/>
            <person name="Sharp S."/>
            <person name="Skelton J."/>
            <person name="Simmonds M.N."/>
            <person name="Squares R."/>
            <person name="Squares S."/>
            <person name="Stevens K."/>
            <person name="Taylor K."/>
            <person name="Taylor R.G."/>
            <person name="Tivey A."/>
            <person name="Walsh S.V."/>
            <person name="Warren T."/>
            <person name="Whitehead S."/>
            <person name="Woodward J.R."/>
            <person name="Volckaert G."/>
            <person name="Aert R."/>
            <person name="Robben J."/>
            <person name="Grymonprez B."/>
            <person name="Weltjens I."/>
            <person name="Vanstreels E."/>
            <person name="Rieger M."/>
            <person name="Schaefer M."/>
            <person name="Mueller-Auer S."/>
            <person name="Gabel C."/>
            <person name="Fuchs M."/>
            <person name="Duesterhoeft A."/>
            <person name="Fritzc C."/>
            <person name="Holzer E."/>
            <person name="Moestl D."/>
            <person name="Hilbert H."/>
            <person name="Borzym K."/>
            <person name="Langer I."/>
            <person name="Beck A."/>
            <person name="Lehrach H."/>
            <person name="Reinhardt R."/>
            <person name="Pohl T.M."/>
            <person name="Eger P."/>
            <person name="Zimmermann W."/>
            <person name="Wedler H."/>
            <person name="Wambutt R."/>
            <person name="Purnelle B."/>
            <person name="Goffeau A."/>
            <person name="Cadieu E."/>
            <person name="Dreano S."/>
            <person name="Gloux S."/>
            <person name="Lelaure V."/>
            <person name="Mottier S."/>
            <person name="Galibert F."/>
            <person name="Aves S.J."/>
            <person name="Xiang Z."/>
            <person name="Hunt C."/>
            <person name="Moore K."/>
            <person name="Hurst S.M."/>
            <person name="Lucas M."/>
            <person name="Rochet M."/>
            <person name="Gaillardin C."/>
            <person name="Tallada V.A."/>
            <person name="Garzon A."/>
            <person name="Thode G."/>
            <person name="Daga R.R."/>
            <person name="Cruzado L."/>
            <person name="Jimenez J."/>
            <person name="Sanchez M."/>
            <person name="del Rey F."/>
            <person name="Benito J."/>
            <person name="Dominguez A."/>
            <person name="Revuelta J.L."/>
            <person name="Moreno S."/>
            <person name="Armstrong J."/>
            <person name="Forsburg S.L."/>
            <person name="Cerutti L."/>
            <person name="Lowe T."/>
            <person name="McCombie W.R."/>
            <person name="Paulsen I."/>
            <person name="Potashkin J."/>
            <person name="Shpakovski G.V."/>
            <person name="Ussery D."/>
            <person name="Barrell B.G."/>
            <person name="Nurse P."/>
        </authorList>
    </citation>
    <scope>NUCLEOTIDE SEQUENCE [LARGE SCALE GENOMIC DNA]</scope>
    <source>
        <strain>972 / ATCC 24843</strain>
    </source>
</reference>
<reference key="2">
    <citation type="journal article" date="2006" name="Nat. Biotechnol.">
        <title>ORFeome cloning and global analysis of protein localization in the fission yeast Schizosaccharomyces pombe.</title>
        <authorList>
            <person name="Matsuyama A."/>
            <person name="Arai R."/>
            <person name="Yashiroda Y."/>
            <person name="Shirai A."/>
            <person name="Kamata A."/>
            <person name="Sekido S."/>
            <person name="Kobayashi Y."/>
            <person name="Hashimoto A."/>
            <person name="Hamamoto M."/>
            <person name="Hiraoka Y."/>
            <person name="Horinouchi S."/>
            <person name="Yoshida M."/>
        </authorList>
    </citation>
    <scope>SUBCELLULAR LOCATION [LARGE SCALE ANALYSIS]</scope>
</reference>
<reference key="3">
    <citation type="journal article" date="2008" name="J. Proteome Res.">
        <title>Phosphoproteome analysis of fission yeast.</title>
        <authorList>
            <person name="Wilson-Grady J.T."/>
            <person name="Villen J."/>
            <person name="Gygi S.P."/>
        </authorList>
    </citation>
    <scope>PHOSPHORYLATION [LARGE SCALE ANALYSIS] AT SER-482</scope>
    <scope>IDENTIFICATION BY MASS SPECTROMETRY</scope>
</reference>
<comment type="function">
    <text evidence="1">E3 ubiquitin-protein ligase that plays a key role in the ribosome quality control (RQC), a pathway that takes place when a ribosome has stalled during translation, leading to degradation of nascent peptide chains. Activated when ribosomes are stalled within an mRNA following translation of prematurely polyadenylated mRNAs. Acts as a ribosome collision sensor: specifically recognizes and binds collided ribosome and ubiquitinates the 40S ribosomal proteins rps20/uS10 and rps3/uS3. Catalyzes 'Lys-63'-linked polyubiquitination of rps20/uS10, promoting recruitment of the RQT (ribosome quality control trigger) complex, which drives the disassembly of stalled ribosomes, followed by degradation of nascent peptides.</text>
</comment>
<comment type="catalytic activity">
    <reaction evidence="1">
        <text>S-ubiquitinyl-[E2 ubiquitin-conjugating enzyme]-L-cysteine + [acceptor protein]-L-lysine = [E2 ubiquitin-conjugating enzyme]-L-cysteine + N(6)-ubiquitinyl-[acceptor protein]-L-lysine.</text>
        <dbReference type="EC" id="2.3.2.27"/>
    </reaction>
</comment>
<comment type="pathway">
    <text evidence="1">Protein modification; protein ubiquitination.</text>
</comment>
<comment type="subcellular location">
    <subcellularLocation>
        <location evidence="5">Cytoplasm</location>
    </subcellularLocation>
</comment>
<comment type="similarity">
    <text evidence="7">Belongs to the ZNF598/HEL2 family.</text>
</comment>
<gene>
    <name type="ORF">SPCC1223.01</name>
    <name type="ORF">SPCC285.18</name>
</gene>
<organism>
    <name type="scientific">Schizosaccharomyces pombe (strain 972 / ATCC 24843)</name>
    <name type="common">Fission yeast</name>
    <dbReference type="NCBI Taxonomy" id="284812"/>
    <lineage>
        <taxon>Eukaryota</taxon>
        <taxon>Fungi</taxon>
        <taxon>Dikarya</taxon>
        <taxon>Ascomycota</taxon>
        <taxon>Taphrinomycotina</taxon>
        <taxon>Schizosaccharomycetes</taxon>
        <taxon>Schizosaccharomycetales</taxon>
        <taxon>Schizosaccharomycetaceae</taxon>
        <taxon>Schizosaccharomyces</taxon>
    </lineage>
</organism>
<name>HEL2_SCHPO</name>